<gene>
    <name evidence="1" type="primary">mnmE</name>
    <name evidence="1" type="synonym">trmE</name>
    <name type="ordered locus">Pro_0214</name>
</gene>
<proteinExistence type="inferred from homology"/>
<keyword id="KW-0963">Cytoplasm</keyword>
<keyword id="KW-0342">GTP-binding</keyword>
<keyword id="KW-0378">Hydrolase</keyword>
<keyword id="KW-0460">Magnesium</keyword>
<keyword id="KW-0479">Metal-binding</keyword>
<keyword id="KW-0547">Nucleotide-binding</keyword>
<keyword id="KW-0630">Potassium</keyword>
<keyword id="KW-1185">Reference proteome</keyword>
<keyword id="KW-0819">tRNA processing</keyword>
<organism>
    <name type="scientific">Prochlorococcus marinus (strain SARG / CCMP1375 / SS120)</name>
    <dbReference type="NCBI Taxonomy" id="167539"/>
    <lineage>
        <taxon>Bacteria</taxon>
        <taxon>Bacillati</taxon>
        <taxon>Cyanobacteriota</taxon>
        <taxon>Cyanophyceae</taxon>
        <taxon>Synechococcales</taxon>
        <taxon>Prochlorococcaceae</taxon>
        <taxon>Prochlorococcus</taxon>
    </lineage>
</organism>
<evidence type="ECO:0000255" key="1">
    <source>
        <dbReference type="HAMAP-Rule" id="MF_00379"/>
    </source>
</evidence>
<accession>Q7VE01</accession>
<name>MNME_PROMA</name>
<reference key="1">
    <citation type="journal article" date="2003" name="Proc. Natl. Acad. Sci. U.S.A.">
        <title>Genome sequence of the cyanobacterium Prochlorococcus marinus SS120, a nearly minimal oxyphototrophic genome.</title>
        <authorList>
            <person name="Dufresne A."/>
            <person name="Salanoubat M."/>
            <person name="Partensky F."/>
            <person name="Artiguenave F."/>
            <person name="Axmann I.M."/>
            <person name="Barbe V."/>
            <person name="Duprat S."/>
            <person name="Galperin M.Y."/>
            <person name="Koonin E.V."/>
            <person name="Le Gall F."/>
            <person name="Makarova K.S."/>
            <person name="Ostrowski M."/>
            <person name="Oztas S."/>
            <person name="Robert C."/>
            <person name="Rogozin I.B."/>
            <person name="Scanlan D.J."/>
            <person name="Tandeau de Marsac N."/>
            <person name="Weissenbach J."/>
            <person name="Wincker P."/>
            <person name="Wolf Y.I."/>
            <person name="Hess W.R."/>
        </authorList>
    </citation>
    <scope>NUCLEOTIDE SEQUENCE [LARGE SCALE GENOMIC DNA]</scope>
    <source>
        <strain>SARG / CCMP1375 / SS120</strain>
    </source>
</reference>
<sequence length="455" mass="49822">MDLAFSTEENIAAIASAVAPGQGAIAIVKVSGASAKEVVKNVVRTPSNKIWSSHKILYGHVIDKSTKKNIDEVLILIMDGPRSFTGEDVVEIHCHGGLIVVQQVLDAILKQPKTRRAFPGEFSQRAVLNGRLDITQAEAINDLIHARSQKAAQLAIAGIDGDITNKINYLREKLLDQLSEIEARIDFEEDLPKLNSKKLLTDLMLIRAELKQLINDAKQGSLIRNGLKVALVGLPNVGKSSILNLLSKHERAIVTDLPGTTRDLLESEIILEGVPITLIDTAGIRETNNEIEKIGVSLSQKTLFTADIVVLIFDLSKGWNKNDQNLLEKIPKGTPTLIIGNKADLKSQSTNIQPHATMTAITGEGEKELIQELLKLAGANELEGIEVALNQRQLDLVKVAVNALDQIEKVAAESLAWDFWTIDLREAIYKLGELTGEEVTEALLDRIFSRFCIGK</sequence>
<comment type="function">
    <text evidence="1">Exhibits a very high intrinsic GTPase hydrolysis rate. Involved in the addition of a carboxymethylaminomethyl (cmnm) group at the wobble position (U34) of certain tRNAs, forming tRNA-cmnm(5)s(2)U34.</text>
</comment>
<comment type="cofactor">
    <cofactor evidence="1">
        <name>K(+)</name>
        <dbReference type="ChEBI" id="CHEBI:29103"/>
    </cofactor>
    <text evidence="1">Binds 1 potassium ion per subunit.</text>
</comment>
<comment type="subunit">
    <text evidence="1">Homodimer. Heterotetramer of two MnmE and two MnmG subunits.</text>
</comment>
<comment type="subcellular location">
    <subcellularLocation>
        <location evidence="1">Cytoplasm</location>
    </subcellularLocation>
</comment>
<comment type="similarity">
    <text evidence="1">Belongs to the TRAFAC class TrmE-Era-EngA-EngB-Septin-like GTPase superfamily. TrmE GTPase family.</text>
</comment>
<feature type="chain" id="PRO_0000188901" description="tRNA modification GTPase MnmE">
    <location>
        <begin position="1"/>
        <end position="455"/>
    </location>
</feature>
<feature type="domain" description="TrmE-type G">
    <location>
        <begin position="226"/>
        <end position="378"/>
    </location>
</feature>
<feature type="binding site" evidence="1">
    <location>
        <position position="29"/>
    </location>
    <ligand>
        <name>(6S)-5-formyl-5,6,7,8-tetrahydrofolate</name>
        <dbReference type="ChEBI" id="CHEBI:57457"/>
    </ligand>
</feature>
<feature type="binding site" evidence="1">
    <location>
        <position position="91"/>
    </location>
    <ligand>
        <name>(6S)-5-formyl-5,6,7,8-tetrahydrofolate</name>
        <dbReference type="ChEBI" id="CHEBI:57457"/>
    </ligand>
</feature>
<feature type="binding site" evidence="1">
    <location>
        <position position="131"/>
    </location>
    <ligand>
        <name>(6S)-5-formyl-5,6,7,8-tetrahydrofolate</name>
        <dbReference type="ChEBI" id="CHEBI:57457"/>
    </ligand>
</feature>
<feature type="binding site" evidence="1">
    <location>
        <begin position="236"/>
        <end position="241"/>
    </location>
    <ligand>
        <name>GTP</name>
        <dbReference type="ChEBI" id="CHEBI:37565"/>
    </ligand>
</feature>
<feature type="binding site" evidence="1">
    <location>
        <position position="236"/>
    </location>
    <ligand>
        <name>K(+)</name>
        <dbReference type="ChEBI" id="CHEBI:29103"/>
    </ligand>
</feature>
<feature type="binding site" evidence="1">
    <location>
        <position position="240"/>
    </location>
    <ligand>
        <name>Mg(2+)</name>
        <dbReference type="ChEBI" id="CHEBI:18420"/>
    </ligand>
</feature>
<feature type="binding site" evidence="1">
    <location>
        <begin position="255"/>
        <end position="261"/>
    </location>
    <ligand>
        <name>GTP</name>
        <dbReference type="ChEBI" id="CHEBI:37565"/>
    </ligand>
</feature>
<feature type="binding site" evidence="1">
    <location>
        <position position="255"/>
    </location>
    <ligand>
        <name>K(+)</name>
        <dbReference type="ChEBI" id="CHEBI:29103"/>
    </ligand>
</feature>
<feature type="binding site" evidence="1">
    <location>
        <position position="257"/>
    </location>
    <ligand>
        <name>K(+)</name>
        <dbReference type="ChEBI" id="CHEBI:29103"/>
    </ligand>
</feature>
<feature type="binding site" evidence="1">
    <location>
        <position position="260"/>
    </location>
    <ligand>
        <name>K(+)</name>
        <dbReference type="ChEBI" id="CHEBI:29103"/>
    </ligand>
</feature>
<feature type="binding site" evidence="1">
    <location>
        <position position="261"/>
    </location>
    <ligand>
        <name>Mg(2+)</name>
        <dbReference type="ChEBI" id="CHEBI:18420"/>
    </ligand>
</feature>
<feature type="binding site" evidence="1">
    <location>
        <begin position="280"/>
        <end position="283"/>
    </location>
    <ligand>
        <name>GTP</name>
        <dbReference type="ChEBI" id="CHEBI:37565"/>
    </ligand>
</feature>
<feature type="binding site" evidence="1">
    <location>
        <begin position="341"/>
        <end position="344"/>
    </location>
    <ligand>
        <name>GTP</name>
        <dbReference type="ChEBI" id="CHEBI:37565"/>
    </ligand>
</feature>
<feature type="binding site" evidence="1">
    <location>
        <position position="455"/>
    </location>
    <ligand>
        <name>(6S)-5-formyl-5,6,7,8-tetrahydrofolate</name>
        <dbReference type="ChEBI" id="CHEBI:57457"/>
    </ligand>
</feature>
<dbReference type="EC" id="3.6.-.-" evidence="1"/>
<dbReference type="EMBL" id="AE017126">
    <property type="protein sequence ID" value="AAP99260.1"/>
    <property type="molecule type" value="Genomic_DNA"/>
</dbReference>
<dbReference type="RefSeq" id="NP_874608.1">
    <property type="nucleotide sequence ID" value="NC_005042.1"/>
</dbReference>
<dbReference type="RefSeq" id="WP_011124369.1">
    <property type="nucleotide sequence ID" value="NC_005042.1"/>
</dbReference>
<dbReference type="SMR" id="Q7VE01"/>
<dbReference type="STRING" id="167539.Pro_0214"/>
<dbReference type="EnsemblBacteria" id="AAP99260">
    <property type="protein sequence ID" value="AAP99260"/>
    <property type="gene ID" value="Pro_0214"/>
</dbReference>
<dbReference type="KEGG" id="pma:Pro_0214"/>
<dbReference type="PATRIC" id="fig|167539.5.peg.221"/>
<dbReference type="eggNOG" id="COG0486">
    <property type="taxonomic scope" value="Bacteria"/>
</dbReference>
<dbReference type="HOGENOM" id="CLU_019624_4_1_3"/>
<dbReference type="OrthoDB" id="9805918at2"/>
<dbReference type="Proteomes" id="UP000001420">
    <property type="component" value="Chromosome"/>
</dbReference>
<dbReference type="GO" id="GO:0005829">
    <property type="term" value="C:cytosol"/>
    <property type="evidence" value="ECO:0007669"/>
    <property type="project" value="TreeGrafter"/>
</dbReference>
<dbReference type="GO" id="GO:0005525">
    <property type="term" value="F:GTP binding"/>
    <property type="evidence" value="ECO:0007669"/>
    <property type="project" value="UniProtKB-UniRule"/>
</dbReference>
<dbReference type="GO" id="GO:0003924">
    <property type="term" value="F:GTPase activity"/>
    <property type="evidence" value="ECO:0007669"/>
    <property type="project" value="UniProtKB-UniRule"/>
</dbReference>
<dbReference type="GO" id="GO:0046872">
    <property type="term" value="F:metal ion binding"/>
    <property type="evidence" value="ECO:0007669"/>
    <property type="project" value="UniProtKB-KW"/>
</dbReference>
<dbReference type="GO" id="GO:0030488">
    <property type="term" value="P:tRNA methylation"/>
    <property type="evidence" value="ECO:0007669"/>
    <property type="project" value="TreeGrafter"/>
</dbReference>
<dbReference type="GO" id="GO:0002098">
    <property type="term" value="P:tRNA wobble uridine modification"/>
    <property type="evidence" value="ECO:0007669"/>
    <property type="project" value="TreeGrafter"/>
</dbReference>
<dbReference type="CDD" id="cd04164">
    <property type="entry name" value="trmE"/>
    <property type="match status" value="1"/>
</dbReference>
<dbReference type="CDD" id="cd14858">
    <property type="entry name" value="TrmE_N"/>
    <property type="match status" value="1"/>
</dbReference>
<dbReference type="Gene3D" id="3.40.50.300">
    <property type="entry name" value="P-loop containing nucleotide triphosphate hydrolases"/>
    <property type="match status" value="1"/>
</dbReference>
<dbReference type="Gene3D" id="3.30.1360.120">
    <property type="entry name" value="Probable tRNA modification gtpase trme, domain 1"/>
    <property type="match status" value="1"/>
</dbReference>
<dbReference type="Gene3D" id="1.20.120.430">
    <property type="entry name" value="tRNA modification GTPase MnmE domain 2"/>
    <property type="match status" value="1"/>
</dbReference>
<dbReference type="HAMAP" id="MF_00379">
    <property type="entry name" value="GTPase_MnmE"/>
    <property type="match status" value="1"/>
</dbReference>
<dbReference type="InterPro" id="IPR031168">
    <property type="entry name" value="G_TrmE"/>
</dbReference>
<dbReference type="InterPro" id="IPR006073">
    <property type="entry name" value="GTP-bd"/>
</dbReference>
<dbReference type="InterPro" id="IPR018948">
    <property type="entry name" value="GTP-bd_TrmE_N"/>
</dbReference>
<dbReference type="InterPro" id="IPR004520">
    <property type="entry name" value="GTPase_MnmE"/>
</dbReference>
<dbReference type="InterPro" id="IPR027368">
    <property type="entry name" value="MnmE_dom2"/>
</dbReference>
<dbReference type="InterPro" id="IPR025867">
    <property type="entry name" value="MnmE_helical"/>
</dbReference>
<dbReference type="InterPro" id="IPR027417">
    <property type="entry name" value="P-loop_NTPase"/>
</dbReference>
<dbReference type="InterPro" id="IPR005225">
    <property type="entry name" value="Small_GTP-bd"/>
</dbReference>
<dbReference type="InterPro" id="IPR027266">
    <property type="entry name" value="TrmE/GcvT_dom1"/>
</dbReference>
<dbReference type="NCBIfam" id="TIGR00450">
    <property type="entry name" value="mnmE_trmE_thdF"/>
    <property type="match status" value="1"/>
</dbReference>
<dbReference type="NCBIfam" id="NF003661">
    <property type="entry name" value="PRK05291.1-3"/>
    <property type="match status" value="1"/>
</dbReference>
<dbReference type="NCBIfam" id="TIGR00231">
    <property type="entry name" value="small_GTP"/>
    <property type="match status" value="1"/>
</dbReference>
<dbReference type="PANTHER" id="PTHR42714">
    <property type="entry name" value="TRNA MODIFICATION GTPASE GTPBP3"/>
    <property type="match status" value="1"/>
</dbReference>
<dbReference type="PANTHER" id="PTHR42714:SF2">
    <property type="entry name" value="TRNA MODIFICATION GTPASE GTPBP3, MITOCHONDRIAL"/>
    <property type="match status" value="1"/>
</dbReference>
<dbReference type="Pfam" id="PF01926">
    <property type="entry name" value="MMR_HSR1"/>
    <property type="match status" value="1"/>
</dbReference>
<dbReference type="Pfam" id="PF12631">
    <property type="entry name" value="MnmE_helical"/>
    <property type="match status" value="1"/>
</dbReference>
<dbReference type="Pfam" id="PF10396">
    <property type="entry name" value="TrmE_N"/>
    <property type="match status" value="1"/>
</dbReference>
<dbReference type="PRINTS" id="PR00449">
    <property type="entry name" value="RASTRNSFRMNG"/>
</dbReference>
<dbReference type="SUPFAM" id="SSF52540">
    <property type="entry name" value="P-loop containing nucleoside triphosphate hydrolases"/>
    <property type="match status" value="1"/>
</dbReference>
<dbReference type="SUPFAM" id="SSF116878">
    <property type="entry name" value="TrmE connector domain"/>
    <property type="match status" value="1"/>
</dbReference>
<dbReference type="PROSITE" id="PS51709">
    <property type="entry name" value="G_TRME"/>
    <property type="match status" value="1"/>
</dbReference>
<protein>
    <recommendedName>
        <fullName evidence="1">tRNA modification GTPase MnmE</fullName>
        <ecNumber evidence="1">3.6.-.-</ecNumber>
    </recommendedName>
</protein>